<sequence>MDIVVIRDDIYPIFNNEDKIVLLLGNHQEFISNFISKINIHALFYCKYSIIPDEIGTLNVSIIESSHKIRGRYINVEEFISLLYPIQLCSKYTYKNDIDHDTMFIHDIIFFNNTWVRILFIEFLGIIDKQYETCIINPYLVKDNYKIFKNILLASIINNIIFDKNSTLIELINKLYTRYHIDKYIMTCIVKYNDYNNIKLIYHCYNRNKFNAFIYAWFRSQITCDSIEENEKVERMFNNISKRI</sequence>
<organism>
    <name type="scientific">Swinepox virus (strain Swine/Nebraska/17077-99/1999)</name>
    <name type="common">SWPV</name>
    <dbReference type="NCBI Taxonomy" id="300880"/>
    <lineage>
        <taxon>Viruses</taxon>
        <taxon>Varidnaviria</taxon>
        <taxon>Bamfordvirae</taxon>
        <taxon>Nucleocytoviricota</taxon>
        <taxon>Pokkesviricetes</taxon>
        <taxon>Chitovirales</taxon>
        <taxon>Poxviridae</taxon>
        <taxon>Chordopoxvirinae</taxon>
        <taxon>Suipoxvirus</taxon>
        <taxon>Swinepox virus</taxon>
    </lineage>
</organism>
<reference key="1">
    <citation type="journal article" date="2002" name="J. Virol.">
        <title>The genome of swinepox virus.</title>
        <authorList>
            <person name="Afonso C.L."/>
            <person name="Tulman E.R."/>
            <person name="Lu Z."/>
            <person name="Zsak L."/>
            <person name="Osorio F.A."/>
            <person name="Balinsky C."/>
            <person name="Kutish G.F."/>
            <person name="Rock D.L."/>
        </authorList>
    </citation>
    <scope>NUCLEOTIDE SEQUENCE [LARGE SCALE GENOMIC DNA]</scope>
</reference>
<accession>Q8V3L7</accession>
<evidence type="ECO:0000250" key="1"/>
<evidence type="ECO:0000305" key="2"/>
<gene>
    <name type="ordered locus">SPV078</name>
</gene>
<feature type="chain" id="PRO_0000099438" description="27 kDa core protein">
    <location>
        <begin position="1"/>
        <end position="244"/>
    </location>
</feature>
<organismHost>
    <name type="scientific">Sus scrofa</name>
    <name type="common">Pig</name>
    <dbReference type="NCBI Taxonomy" id="9823"/>
</organismHost>
<proteinExistence type="evidence at transcript level"/>
<comment type="function">
    <text evidence="1">Late protein which is part of a large complex required for early virion morphogenesis. This complex participates in the formation of virosomes and the incorporation of virosomal contents into nascent immature virions (By similarity).</text>
</comment>
<comment type="subcellular location">
    <subcellularLocation>
        <location evidence="1">Virion</location>
    </subcellularLocation>
    <text evidence="1">Localizes to the virion core.</text>
</comment>
<comment type="induction">
    <text>Expressed in the late phase of the viral replicative cycle.</text>
</comment>
<comment type="similarity">
    <text evidence="2">Belongs to the chordopoxvirinae D3 family.</text>
</comment>
<dbReference type="EMBL" id="AF410153">
    <property type="protein sequence ID" value="AAL69817.1"/>
    <property type="molecule type" value="Genomic_DNA"/>
</dbReference>
<dbReference type="RefSeq" id="NP_570238.1">
    <property type="nucleotide sequence ID" value="NC_003389.1"/>
</dbReference>
<dbReference type="GeneID" id="932355"/>
<dbReference type="KEGG" id="vg:932355"/>
<dbReference type="Proteomes" id="UP000000871">
    <property type="component" value="Segment"/>
</dbReference>
<dbReference type="GO" id="GO:0044423">
    <property type="term" value="C:virion component"/>
    <property type="evidence" value="ECO:0007669"/>
    <property type="project" value="UniProtKB-KW"/>
</dbReference>
<dbReference type="InterPro" id="IPR007660">
    <property type="entry name" value="Poxvirus_D3"/>
</dbReference>
<dbReference type="Pfam" id="PF04580">
    <property type="entry name" value="Pox_D3"/>
    <property type="match status" value="1"/>
</dbReference>
<protein>
    <recommendedName>
        <fullName>27 kDa core protein</fullName>
    </recommendedName>
</protein>
<keyword id="KW-0426">Late protein</keyword>
<keyword id="KW-1185">Reference proteome</keyword>
<keyword id="KW-0946">Virion</keyword>
<name>D3_SWPV1</name>